<reference key="1">
    <citation type="journal article" date="1987" name="J. Biochem.">
        <title>Molecular cloning and sequencing of cDNA encoding goat pre alpha-lactalbumin.</title>
        <authorList>
            <person name="Kumagai I."/>
            <person name="Tamaki E."/>
            <person name="Kakinuma S."/>
            <person name="Miura K."/>
        </authorList>
    </citation>
    <scope>NUCLEOTIDE SEQUENCE [MRNA]</scope>
</reference>
<reference key="2">
    <citation type="journal article" date="1991" name="Gene">
        <title>Sequence of the goat alpha-lactalbumin-encoding gene: comparison with the bovine gene and evidence of related sequences in the goat genome.</title>
        <authorList>
            <person name="Vilotte J.-L."/>
            <person name="Soulier S."/>
            <person name="Printz C."/>
            <person name="Mercier J.-C."/>
        </authorList>
    </citation>
    <scope>NUCLEOTIDE SEQUENCE</scope>
</reference>
<reference key="3">
    <citation type="journal article" date="1979" name="Arch. Biochem. Biophys.">
        <title>The amino acid sequence of goat alpha-lactalbumin.</title>
        <authorList>
            <person name="McGillivray R.T.A."/>
            <person name="Brew K."/>
            <person name="Barnes K."/>
        </authorList>
    </citation>
    <scope>PROTEIN SEQUENCE OF 20-142</scope>
</reference>
<reference key="4">
    <citation type="journal article" date="1984" name="J. Biol. Chem.">
        <title>Evolution of alpha-lactalbumins. The complete amino acid sequence of the alpha-lactalbumin from a marsupial (Macropus rufogriseus) and corrections to regions of sequence in bovine and goat alpha-lactalbumins.</title>
        <authorList>
            <person name="Shewale J.G."/>
            <person name="Sinha S.K."/>
            <person name="Brew K."/>
        </authorList>
    </citation>
    <scope>SEQUENCE REVISION</scope>
</reference>
<reference evidence="5" key="5">
    <citation type="journal article" date="1996" name="Structure">
        <title>Crystal structures of guinea-pig, goat and bovine alpha-lactalbumin highlight the enhanced conformational flexibility of regions that are significant for its action in lactose synthase.</title>
        <authorList>
            <person name="Pike A.C.W."/>
            <person name="Brew K."/>
            <person name="Acharya K.R."/>
        </authorList>
    </citation>
    <scope>X-RAY CRYSTALLOGRAPHY (2.3 ANGSTROMS) OF 20-142 IN COMPLEX WITH CALCIUM</scope>
</reference>
<reference key="6">
    <citation type="journal article" date="1999" name="J. Mol. Biol.">
        <title>Effect of the extra N-terminal methionine residue on the stability and folding of recombinant alpha-lactalbumin expressed in Escherichia coli.</title>
        <authorList>
            <person name="Chaudhuri T.K."/>
            <person name="Horii K."/>
            <person name="Yoda T."/>
            <person name="Arai M."/>
            <person name="Nagata S."/>
            <person name="Terada T.P."/>
            <person name="Uchiyama H."/>
            <person name="Ikura T."/>
            <person name="Tsumoto K."/>
            <person name="Kataoka H."/>
            <person name="Matsushima M."/>
            <person name="Kuwajima K."/>
            <person name="Kumagai I."/>
        </authorList>
    </citation>
    <scope>X-RAY CRYSTALLOGRAPHY (2.0 ANGSTROMS)</scope>
</reference>
<organism>
    <name type="scientific">Capra hircus</name>
    <name type="common">Goat</name>
    <dbReference type="NCBI Taxonomy" id="9925"/>
    <lineage>
        <taxon>Eukaryota</taxon>
        <taxon>Metazoa</taxon>
        <taxon>Chordata</taxon>
        <taxon>Craniata</taxon>
        <taxon>Vertebrata</taxon>
        <taxon>Euteleostomi</taxon>
        <taxon>Mammalia</taxon>
        <taxon>Eutheria</taxon>
        <taxon>Laurasiatheria</taxon>
        <taxon>Artiodactyla</taxon>
        <taxon>Ruminantia</taxon>
        <taxon>Pecora</taxon>
        <taxon>Bovidae</taxon>
        <taxon>Caprinae</taxon>
        <taxon>Capra</taxon>
    </lineage>
</organism>
<name>LALBA_CAPHI</name>
<evidence type="ECO:0000255" key="1"/>
<evidence type="ECO:0000255" key="2">
    <source>
        <dbReference type="PROSITE-ProRule" id="PRU00680"/>
    </source>
</evidence>
<evidence type="ECO:0000269" key="3">
    <source>
    </source>
</evidence>
<evidence type="ECO:0000269" key="4">
    <source>
    </source>
</evidence>
<evidence type="ECO:0007744" key="5">
    <source>
        <dbReference type="PDB" id="1HFY"/>
    </source>
</evidence>
<evidence type="ECO:0007829" key="6">
    <source>
        <dbReference type="PDB" id="1FKV"/>
    </source>
</evidence>
<evidence type="ECO:0007829" key="7">
    <source>
        <dbReference type="PDB" id="3B0K"/>
    </source>
</evidence>
<proteinExistence type="evidence at protein level"/>
<comment type="function">
    <text>Regulatory subunit of lactose synthase, changes the substrate specificity of galactosyltransferase in the mammary gland making glucose a good acceptor substrate for this enzyme. This enables LS to synthesize lactose, the major carbohydrate component of milk. In other tissues, galactosyltransferase transfers galactose onto the N-acetylglucosamine of the oligosaccharide chains in glycoproteins.</text>
</comment>
<comment type="subunit">
    <text>Lactose synthase (LS) is a heterodimer of a catalytic component, beta1,4-galactosyltransferase (beta4Gal-T1) and a regulatory component, alpha-lactalbumin (LA).</text>
</comment>
<comment type="subcellular location">
    <subcellularLocation>
        <location>Secreted</location>
    </subcellularLocation>
</comment>
<comment type="tissue specificity">
    <text>Mammary gland specific. Secreted in milk.</text>
</comment>
<comment type="similarity">
    <text evidence="2">Belongs to the glycosyl hydrolase 22 family.</text>
</comment>
<dbReference type="EMBL" id="X05149">
    <property type="protein sequence ID" value="CAA28797.1"/>
    <property type="molecule type" value="mRNA"/>
</dbReference>
<dbReference type="EMBL" id="M63868">
    <property type="status" value="NOT_ANNOTATED_CDS"/>
    <property type="molecule type" value="Genomic_DNA"/>
</dbReference>
<dbReference type="PIR" id="JU0455">
    <property type="entry name" value="LAGT"/>
</dbReference>
<dbReference type="RefSeq" id="NP_001272564.1">
    <property type="nucleotide sequence ID" value="NM_001285635.1"/>
</dbReference>
<dbReference type="PDB" id="1FKQ">
    <property type="method" value="X-ray"/>
    <property type="resolution" value="1.80 A"/>
    <property type="chains" value="A=20-142"/>
</dbReference>
<dbReference type="PDB" id="1FKV">
    <property type="method" value="X-ray"/>
    <property type="resolution" value="2.00 A"/>
    <property type="chains" value="A=20-142"/>
</dbReference>
<dbReference type="PDB" id="1HFY">
    <property type="method" value="X-ray"/>
    <property type="resolution" value="2.30 A"/>
    <property type="chains" value="A/B=20-142"/>
</dbReference>
<dbReference type="PDB" id="1HMK">
    <property type="method" value="X-ray"/>
    <property type="resolution" value="2.00 A"/>
    <property type="chains" value="A=19-142"/>
</dbReference>
<dbReference type="PDB" id="3B0K">
    <property type="method" value="X-ray"/>
    <property type="resolution" value="1.60 A"/>
    <property type="chains" value="A/B=21-142"/>
</dbReference>
<dbReference type="PDBsum" id="1FKQ"/>
<dbReference type="PDBsum" id="1FKV"/>
<dbReference type="PDBsum" id="1HFY"/>
<dbReference type="PDBsum" id="1HMK"/>
<dbReference type="PDBsum" id="3B0K"/>
<dbReference type="SMR" id="P00712"/>
<dbReference type="STRING" id="9925.ENSCHIP00000024154"/>
<dbReference type="GlyCosmos" id="P00712">
    <property type="glycosylation" value="2 sites, No reported glycans"/>
</dbReference>
<dbReference type="Ensembl" id="ENSCHIT00000032014.1">
    <property type="protein sequence ID" value="ENSCHIP00000024154.1"/>
    <property type="gene ID" value="ENSCHIG00000021449.1"/>
</dbReference>
<dbReference type="Ensembl" id="ENSCHIT00020012064">
    <property type="protein sequence ID" value="ENSCHIP00020009226"/>
    <property type="gene ID" value="ENSCHIG00020005845"/>
</dbReference>
<dbReference type="Ensembl" id="ENSCHIT00040007564">
    <property type="protein sequence ID" value="ENSCHIP00040006054"/>
    <property type="gene ID" value="ENSCHIG00040003462"/>
</dbReference>
<dbReference type="GeneID" id="100860779"/>
<dbReference type="KEGG" id="chx:100860779"/>
<dbReference type="CTD" id="3906"/>
<dbReference type="GeneTree" id="ENSGT00940000161726"/>
<dbReference type="OMA" id="PEWICTI"/>
<dbReference type="OrthoDB" id="17373at2759"/>
<dbReference type="EvolutionaryTrace" id="P00712"/>
<dbReference type="Proteomes" id="UP000291000">
    <property type="component" value="Chromosome 5"/>
</dbReference>
<dbReference type="Proteomes" id="UP000694566">
    <property type="component" value="Unplaced"/>
</dbReference>
<dbReference type="Bgee" id="ENSCHIG00000021449">
    <property type="expression patterns" value="Expressed in testis"/>
</dbReference>
<dbReference type="GO" id="GO:0005576">
    <property type="term" value="C:extracellular region"/>
    <property type="evidence" value="ECO:0007669"/>
    <property type="project" value="UniProtKB-SubCell"/>
</dbReference>
<dbReference type="GO" id="GO:0032991">
    <property type="term" value="C:protein-containing complex"/>
    <property type="evidence" value="ECO:0007669"/>
    <property type="project" value="Ensembl"/>
</dbReference>
<dbReference type="GO" id="GO:0005509">
    <property type="term" value="F:calcium ion binding"/>
    <property type="evidence" value="ECO:0007669"/>
    <property type="project" value="InterPro"/>
</dbReference>
<dbReference type="GO" id="GO:0004461">
    <property type="term" value="F:lactose synthase activity"/>
    <property type="evidence" value="ECO:0007669"/>
    <property type="project" value="Ensembl"/>
</dbReference>
<dbReference type="GO" id="GO:0003796">
    <property type="term" value="F:lysozyme activity"/>
    <property type="evidence" value="ECO:0007669"/>
    <property type="project" value="TreeGrafter"/>
</dbReference>
<dbReference type="GO" id="GO:0050829">
    <property type="term" value="P:defense response to Gram-negative bacterium"/>
    <property type="evidence" value="ECO:0007669"/>
    <property type="project" value="TreeGrafter"/>
</dbReference>
<dbReference type="GO" id="GO:0050830">
    <property type="term" value="P:defense response to Gram-positive bacterium"/>
    <property type="evidence" value="ECO:0007669"/>
    <property type="project" value="TreeGrafter"/>
</dbReference>
<dbReference type="GO" id="GO:0005989">
    <property type="term" value="P:lactose biosynthetic process"/>
    <property type="evidence" value="ECO:0007669"/>
    <property type="project" value="UniProtKB-KW"/>
</dbReference>
<dbReference type="CDD" id="cd16898">
    <property type="entry name" value="LYZ_LA"/>
    <property type="match status" value="1"/>
</dbReference>
<dbReference type="FunFam" id="1.10.530.10:FF:000014">
    <property type="entry name" value="Alpha-lactalbumin"/>
    <property type="match status" value="1"/>
</dbReference>
<dbReference type="Gene3D" id="1.10.530.10">
    <property type="match status" value="1"/>
</dbReference>
<dbReference type="InterPro" id="IPR001916">
    <property type="entry name" value="Glyco_hydro_22"/>
</dbReference>
<dbReference type="InterPro" id="IPR019799">
    <property type="entry name" value="Glyco_hydro_22_CS"/>
</dbReference>
<dbReference type="InterPro" id="IPR000545">
    <property type="entry name" value="Lactalbumin"/>
</dbReference>
<dbReference type="InterPro" id="IPR023346">
    <property type="entry name" value="Lysozyme-like_dom_sf"/>
</dbReference>
<dbReference type="PANTHER" id="PTHR11407:SF32">
    <property type="entry name" value="ALPHA-LACTALBUMIN"/>
    <property type="match status" value="1"/>
</dbReference>
<dbReference type="PANTHER" id="PTHR11407">
    <property type="entry name" value="LYSOZYME C"/>
    <property type="match status" value="1"/>
</dbReference>
<dbReference type="Pfam" id="PF00062">
    <property type="entry name" value="Lys"/>
    <property type="match status" value="1"/>
</dbReference>
<dbReference type="PRINTS" id="PR00136">
    <property type="entry name" value="LACTALBUMIN"/>
</dbReference>
<dbReference type="PRINTS" id="PR00135">
    <property type="entry name" value="LYZLACT"/>
</dbReference>
<dbReference type="SMART" id="SM00263">
    <property type="entry name" value="LYZ1"/>
    <property type="match status" value="1"/>
</dbReference>
<dbReference type="SUPFAM" id="SSF53955">
    <property type="entry name" value="Lysozyme-like"/>
    <property type="match status" value="1"/>
</dbReference>
<dbReference type="PROSITE" id="PS00128">
    <property type="entry name" value="GLYCOSYL_HYDROL_F22_1"/>
    <property type="match status" value="1"/>
</dbReference>
<dbReference type="PROSITE" id="PS51348">
    <property type="entry name" value="GLYCOSYL_HYDROL_F22_2"/>
    <property type="match status" value="1"/>
</dbReference>
<protein>
    <recommendedName>
        <fullName>Alpha-lactalbumin</fullName>
    </recommendedName>
    <alternativeName>
        <fullName>Lactose synthase B protein</fullName>
    </alternativeName>
</protein>
<gene>
    <name type="primary">LALBA</name>
</gene>
<accession>P00712</accession>
<keyword id="KW-0002">3D-structure</keyword>
<keyword id="KW-0106">Calcium</keyword>
<keyword id="KW-0903">Direct protein sequencing</keyword>
<keyword id="KW-1015">Disulfide bond</keyword>
<keyword id="KW-0325">Glycoprotein</keyword>
<keyword id="KW-0422">Lactose biosynthesis</keyword>
<keyword id="KW-0479">Metal-binding</keyword>
<keyword id="KW-0494">Milk protein</keyword>
<keyword id="KW-1185">Reference proteome</keyword>
<keyword id="KW-0964">Secreted</keyword>
<keyword id="KW-0732">Signal</keyword>
<sequence length="142" mass="16255">MMSFVSLLLVGILFHATQAEQLTKCEVFQKLKDLKDYGGVSLPEWVCTAFHTSGYDTQAIVQNNDSTEYGLFQINNKIWCKDDQNPHSRNICNISCDKFLDDDLTDDIVCAKKILDKVGINYWLAHKALCSEKLDQWLCEKL</sequence>
<feature type="signal peptide" evidence="3">
    <location>
        <begin position="1"/>
        <end position="19"/>
    </location>
</feature>
<feature type="chain" id="PRO_0000018442" description="Alpha-lactalbumin">
    <location>
        <begin position="20"/>
        <end position="142"/>
    </location>
</feature>
<feature type="domain" description="C-type lysozyme" evidence="2">
    <location>
        <begin position="20"/>
        <end position="142"/>
    </location>
</feature>
<feature type="binding site" evidence="4 5">
    <location>
        <position position="98"/>
    </location>
    <ligand>
        <name>Ca(2+)</name>
        <dbReference type="ChEBI" id="CHEBI:29108"/>
    </ligand>
</feature>
<feature type="binding site" evidence="4 5">
    <location>
        <position position="101"/>
    </location>
    <ligand>
        <name>Ca(2+)</name>
        <dbReference type="ChEBI" id="CHEBI:29108"/>
    </ligand>
</feature>
<feature type="binding site" evidence="4 5">
    <location>
        <position position="103"/>
    </location>
    <ligand>
        <name>Ca(2+)</name>
        <dbReference type="ChEBI" id="CHEBI:29108"/>
    </ligand>
</feature>
<feature type="binding site" evidence="4 5">
    <location>
        <position position="106"/>
    </location>
    <ligand>
        <name>Ca(2+)</name>
        <dbReference type="ChEBI" id="CHEBI:29108"/>
    </ligand>
</feature>
<feature type="binding site" evidence="4 5">
    <location>
        <position position="107"/>
    </location>
    <ligand>
        <name>Ca(2+)</name>
        <dbReference type="ChEBI" id="CHEBI:29108"/>
    </ligand>
</feature>
<feature type="glycosylation site" description="N-linked (GlcNAc...) asparagine" evidence="1">
    <location>
        <position position="64"/>
    </location>
</feature>
<feature type="glycosylation site" description="N-linked (GlcNAc...) asparagine" evidence="1">
    <location>
        <position position="93"/>
    </location>
</feature>
<feature type="disulfide bond">
    <location>
        <begin position="25"/>
        <end position="139"/>
    </location>
</feature>
<feature type="disulfide bond">
    <location>
        <begin position="47"/>
        <end position="130"/>
    </location>
</feature>
<feature type="disulfide bond">
    <location>
        <begin position="80"/>
        <end position="96"/>
    </location>
</feature>
<feature type="disulfide bond">
    <location>
        <begin position="92"/>
        <end position="110"/>
    </location>
</feature>
<feature type="helix" evidence="7">
    <location>
        <begin position="24"/>
        <end position="30"/>
    </location>
</feature>
<feature type="helix" evidence="7">
    <location>
        <begin position="32"/>
        <end position="34"/>
    </location>
</feature>
<feature type="helix" evidence="7">
    <location>
        <begin position="37"/>
        <end position="39"/>
    </location>
</feature>
<feature type="helix" evidence="7">
    <location>
        <begin position="42"/>
        <end position="53"/>
    </location>
</feature>
<feature type="strand" evidence="7">
    <location>
        <begin position="60"/>
        <end position="62"/>
    </location>
</feature>
<feature type="strand" evidence="7">
    <location>
        <begin position="67"/>
        <end position="69"/>
    </location>
</feature>
<feature type="turn" evidence="7">
    <location>
        <begin position="70"/>
        <end position="73"/>
    </location>
</feature>
<feature type="turn" evidence="7">
    <location>
        <begin position="76"/>
        <end position="79"/>
    </location>
</feature>
<feature type="helix" evidence="7">
    <location>
        <begin position="96"/>
        <end position="100"/>
    </location>
</feature>
<feature type="helix" evidence="7">
    <location>
        <begin position="105"/>
        <end position="118"/>
    </location>
</feature>
<feature type="helix" evidence="7">
    <location>
        <begin position="120"/>
        <end position="122"/>
    </location>
</feature>
<feature type="helix" evidence="7">
    <location>
        <begin position="127"/>
        <end position="130"/>
    </location>
</feature>
<feature type="strand" evidence="6">
    <location>
        <begin position="131"/>
        <end position="133"/>
    </location>
</feature>
<feature type="helix" evidence="7">
    <location>
        <begin position="134"/>
        <end position="137"/>
    </location>
</feature>